<name>LEPA_LACH4</name>
<accession>A8YVQ1</accession>
<sequence length="612" mass="68797">MDLEKLKDYQKHIRNFAIVAHIDHGKSTIADRILELTDTVSQRQLKNQMLDDMPLERQRGITIKMNSVEVKYHARDGEDYIFHLIDTPGHVDFSYEVSRSLAACEGALMVVDASQGVQAQTLANTYVAIDDDLEILPVINKIDLPSADIPKTKEEIEEMLGLDASEAAEVSGKTGQGIEDMLEKVVKDIPAPSGDITAPLKALIFDSKYDDYRGVVMSVKIEDGVVKPGDRIKIMNTGKEYEVTEVGVSSPHPVKKDLLIAGDVGYITANIKSVRETRVGDTITDATNPTEEPLEGYRQIPPMVYSGMYPVDNRDYDDLKEALQKLQLNDAALEFEPETSTALGFGFRCGFLGLLHMDVVQERLEQEFDLGLIMTAPSVDYHAIMNDGSTKVIDNPSDLPDAGEYQEVQEPYVKAEIMVLNDFVGPVMELCQRKRGEFVTMDYLDKYRVNVIYNMPLAEIIFDFFDDLKSSTKGYASLDYEITGYRSTDLVKIDILLNKEPIDALSFIAHRSEAQDRARQMTSMLKKLIPRQNFEVDIQGAIGAKIISRATIKPYRKDVTWKIHTGDPDRRAKLLEKQKRGKKRMKAVGRVEVPQDAFMAVLKMHDDDIKGK</sequence>
<dbReference type="EC" id="3.6.5.n1" evidence="1"/>
<dbReference type="EMBL" id="CP000517">
    <property type="protein sequence ID" value="ABX27338.1"/>
    <property type="molecule type" value="Genomic_DNA"/>
</dbReference>
<dbReference type="RefSeq" id="WP_012211994.1">
    <property type="nucleotide sequence ID" value="NC_010080.1"/>
</dbReference>
<dbReference type="SMR" id="A8YVQ1"/>
<dbReference type="KEGG" id="lhe:lhv_1332"/>
<dbReference type="eggNOG" id="COG0481">
    <property type="taxonomic scope" value="Bacteria"/>
</dbReference>
<dbReference type="HOGENOM" id="CLU_009995_3_3_9"/>
<dbReference type="Proteomes" id="UP000000790">
    <property type="component" value="Chromosome"/>
</dbReference>
<dbReference type="GO" id="GO:0005886">
    <property type="term" value="C:plasma membrane"/>
    <property type="evidence" value="ECO:0007669"/>
    <property type="project" value="UniProtKB-SubCell"/>
</dbReference>
<dbReference type="GO" id="GO:0005525">
    <property type="term" value="F:GTP binding"/>
    <property type="evidence" value="ECO:0007669"/>
    <property type="project" value="UniProtKB-UniRule"/>
</dbReference>
<dbReference type="GO" id="GO:0003924">
    <property type="term" value="F:GTPase activity"/>
    <property type="evidence" value="ECO:0007669"/>
    <property type="project" value="UniProtKB-UniRule"/>
</dbReference>
<dbReference type="GO" id="GO:0043022">
    <property type="term" value="F:ribosome binding"/>
    <property type="evidence" value="ECO:0007669"/>
    <property type="project" value="UniProtKB-UniRule"/>
</dbReference>
<dbReference type="GO" id="GO:0003746">
    <property type="term" value="F:translation elongation factor activity"/>
    <property type="evidence" value="ECO:0007669"/>
    <property type="project" value="UniProtKB-UniRule"/>
</dbReference>
<dbReference type="GO" id="GO:0045727">
    <property type="term" value="P:positive regulation of translation"/>
    <property type="evidence" value="ECO:0007669"/>
    <property type="project" value="UniProtKB-UniRule"/>
</dbReference>
<dbReference type="CDD" id="cd03699">
    <property type="entry name" value="EF4_II"/>
    <property type="match status" value="1"/>
</dbReference>
<dbReference type="CDD" id="cd16260">
    <property type="entry name" value="EF4_III"/>
    <property type="match status" value="1"/>
</dbReference>
<dbReference type="CDD" id="cd01890">
    <property type="entry name" value="LepA"/>
    <property type="match status" value="1"/>
</dbReference>
<dbReference type="CDD" id="cd03709">
    <property type="entry name" value="lepA_C"/>
    <property type="match status" value="1"/>
</dbReference>
<dbReference type="FunFam" id="3.40.50.300:FF:000078">
    <property type="entry name" value="Elongation factor 4"/>
    <property type="match status" value="1"/>
</dbReference>
<dbReference type="FunFam" id="2.40.30.10:FF:000015">
    <property type="entry name" value="Translation factor GUF1, mitochondrial"/>
    <property type="match status" value="1"/>
</dbReference>
<dbReference type="FunFam" id="3.30.70.240:FF:000007">
    <property type="entry name" value="Translation factor GUF1, mitochondrial"/>
    <property type="match status" value="1"/>
</dbReference>
<dbReference type="FunFam" id="3.30.70.2570:FF:000001">
    <property type="entry name" value="Translation factor GUF1, mitochondrial"/>
    <property type="match status" value="1"/>
</dbReference>
<dbReference type="FunFam" id="3.30.70.870:FF:000004">
    <property type="entry name" value="Translation factor GUF1, mitochondrial"/>
    <property type="match status" value="1"/>
</dbReference>
<dbReference type="Gene3D" id="3.30.70.240">
    <property type="match status" value="1"/>
</dbReference>
<dbReference type="Gene3D" id="3.30.70.2570">
    <property type="entry name" value="Elongation factor 4, C-terminal domain"/>
    <property type="match status" value="1"/>
</dbReference>
<dbReference type="Gene3D" id="3.30.70.870">
    <property type="entry name" value="Elongation Factor G (Translational Gtpase), domain 3"/>
    <property type="match status" value="1"/>
</dbReference>
<dbReference type="Gene3D" id="3.40.50.300">
    <property type="entry name" value="P-loop containing nucleotide triphosphate hydrolases"/>
    <property type="match status" value="1"/>
</dbReference>
<dbReference type="Gene3D" id="2.40.30.10">
    <property type="entry name" value="Translation factors"/>
    <property type="match status" value="1"/>
</dbReference>
<dbReference type="HAMAP" id="MF_00071">
    <property type="entry name" value="LepA"/>
    <property type="match status" value="1"/>
</dbReference>
<dbReference type="InterPro" id="IPR006297">
    <property type="entry name" value="EF-4"/>
</dbReference>
<dbReference type="InterPro" id="IPR035647">
    <property type="entry name" value="EFG_III/V"/>
</dbReference>
<dbReference type="InterPro" id="IPR000640">
    <property type="entry name" value="EFG_V-like"/>
</dbReference>
<dbReference type="InterPro" id="IPR004161">
    <property type="entry name" value="EFTu-like_2"/>
</dbReference>
<dbReference type="InterPro" id="IPR038363">
    <property type="entry name" value="LepA_C_sf"/>
</dbReference>
<dbReference type="InterPro" id="IPR013842">
    <property type="entry name" value="LepA_CTD"/>
</dbReference>
<dbReference type="InterPro" id="IPR035654">
    <property type="entry name" value="LepA_IV"/>
</dbReference>
<dbReference type="InterPro" id="IPR027417">
    <property type="entry name" value="P-loop_NTPase"/>
</dbReference>
<dbReference type="InterPro" id="IPR005225">
    <property type="entry name" value="Small_GTP-bd"/>
</dbReference>
<dbReference type="InterPro" id="IPR000795">
    <property type="entry name" value="T_Tr_GTP-bd_dom"/>
</dbReference>
<dbReference type="NCBIfam" id="TIGR01393">
    <property type="entry name" value="lepA"/>
    <property type="match status" value="1"/>
</dbReference>
<dbReference type="NCBIfam" id="TIGR00231">
    <property type="entry name" value="small_GTP"/>
    <property type="match status" value="1"/>
</dbReference>
<dbReference type="PANTHER" id="PTHR43512:SF4">
    <property type="entry name" value="TRANSLATION FACTOR GUF1 HOMOLOG, CHLOROPLASTIC"/>
    <property type="match status" value="1"/>
</dbReference>
<dbReference type="PANTHER" id="PTHR43512">
    <property type="entry name" value="TRANSLATION FACTOR GUF1-RELATED"/>
    <property type="match status" value="1"/>
</dbReference>
<dbReference type="Pfam" id="PF00679">
    <property type="entry name" value="EFG_C"/>
    <property type="match status" value="1"/>
</dbReference>
<dbReference type="Pfam" id="PF00009">
    <property type="entry name" value="GTP_EFTU"/>
    <property type="match status" value="1"/>
</dbReference>
<dbReference type="Pfam" id="PF03144">
    <property type="entry name" value="GTP_EFTU_D2"/>
    <property type="match status" value="1"/>
</dbReference>
<dbReference type="Pfam" id="PF06421">
    <property type="entry name" value="LepA_C"/>
    <property type="match status" value="1"/>
</dbReference>
<dbReference type="PRINTS" id="PR00315">
    <property type="entry name" value="ELONGATNFCT"/>
</dbReference>
<dbReference type="SUPFAM" id="SSF54980">
    <property type="entry name" value="EF-G C-terminal domain-like"/>
    <property type="match status" value="2"/>
</dbReference>
<dbReference type="SUPFAM" id="SSF52540">
    <property type="entry name" value="P-loop containing nucleoside triphosphate hydrolases"/>
    <property type="match status" value="1"/>
</dbReference>
<dbReference type="PROSITE" id="PS51722">
    <property type="entry name" value="G_TR_2"/>
    <property type="match status" value="1"/>
</dbReference>
<comment type="function">
    <text evidence="1">Required for accurate and efficient protein synthesis under certain stress conditions. May act as a fidelity factor of the translation reaction, by catalyzing a one-codon backward translocation of tRNAs on improperly translocated ribosomes. Back-translocation proceeds from a post-translocation (POST) complex to a pre-translocation (PRE) complex, thus giving elongation factor G a second chance to translocate the tRNAs correctly. Binds to ribosomes in a GTP-dependent manner.</text>
</comment>
<comment type="catalytic activity">
    <reaction evidence="1">
        <text>GTP + H2O = GDP + phosphate + H(+)</text>
        <dbReference type="Rhea" id="RHEA:19669"/>
        <dbReference type="ChEBI" id="CHEBI:15377"/>
        <dbReference type="ChEBI" id="CHEBI:15378"/>
        <dbReference type="ChEBI" id="CHEBI:37565"/>
        <dbReference type="ChEBI" id="CHEBI:43474"/>
        <dbReference type="ChEBI" id="CHEBI:58189"/>
        <dbReference type="EC" id="3.6.5.n1"/>
    </reaction>
</comment>
<comment type="subcellular location">
    <subcellularLocation>
        <location evidence="1">Cell membrane</location>
        <topology evidence="1">Peripheral membrane protein</topology>
        <orientation evidence="1">Cytoplasmic side</orientation>
    </subcellularLocation>
</comment>
<comment type="similarity">
    <text evidence="1">Belongs to the TRAFAC class translation factor GTPase superfamily. Classic translation factor GTPase family. LepA subfamily.</text>
</comment>
<protein>
    <recommendedName>
        <fullName evidence="1">Elongation factor 4</fullName>
        <shortName evidence="1">EF-4</shortName>
        <ecNumber evidence="1">3.6.5.n1</ecNumber>
    </recommendedName>
    <alternativeName>
        <fullName evidence="1">Ribosomal back-translocase LepA</fullName>
    </alternativeName>
</protein>
<proteinExistence type="inferred from homology"/>
<organism>
    <name type="scientific">Lactobacillus helveticus (strain DPC 4571)</name>
    <dbReference type="NCBI Taxonomy" id="405566"/>
    <lineage>
        <taxon>Bacteria</taxon>
        <taxon>Bacillati</taxon>
        <taxon>Bacillota</taxon>
        <taxon>Bacilli</taxon>
        <taxon>Lactobacillales</taxon>
        <taxon>Lactobacillaceae</taxon>
        <taxon>Lactobacillus</taxon>
    </lineage>
</organism>
<feature type="chain" id="PRO_1000071180" description="Elongation factor 4">
    <location>
        <begin position="1"/>
        <end position="612"/>
    </location>
</feature>
<feature type="domain" description="tr-type G">
    <location>
        <begin position="11"/>
        <end position="193"/>
    </location>
</feature>
<feature type="binding site" evidence="1">
    <location>
        <begin position="23"/>
        <end position="28"/>
    </location>
    <ligand>
        <name>GTP</name>
        <dbReference type="ChEBI" id="CHEBI:37565"/>
    </ligand>
</feature>
<feature type="binding site" evidence="1">
    <location>
        <begin position="140"/>
        <end position="143"/>
    </location>
    <ligand>
        <name>GTP</name>
        <dbReference type="ChEBI" id="CHEBI:37565"/>
    </ligand>
</feature>
<evidence type="ECO:0000255" key="1">
    <source>
        <dbReference type="HAMAP-Rule" id="MF_00071"/>
    </source>
</evidence>
<gene>
    <name evidence="1" type="primary">lepA</name>
    <name type="ordered locus">lhv_1332</name>
</gene>
<keyword id="KW-1003">Cell membrane</keyword>
<keyword id="KW-0342">GTP-binding</keyword>
<keyword id="KW-0378">Hydrolase</keyword>
<keyword id="KW-0472">Membrane</keyword>
<keyword id="KW-0547">Nucleotide-binding</keyword>
<keyword id="KW-0648">Protein biosynthesis</keyword>
<reference key="1">
    <citation type="journal article" date="2008" name="J. Bacteriol.">
        <title>Genome sequence of Lactobacillus helveticus: an organism distinguished by selective gene loss and IS element expansion.</title>
        <authorList>
            <person name="Callanan M."/>
            <person name="Kaleta P."/>
            <person name="O'Callaghan J."/>
            <person name="O'Sullivan O."/>
            <person name="Jordan K."/>
            <person name="McAuliffe O."/>
            <person name="Sangrador-Vegas A."/>
            <person name="Slattery L."/>
            <person name="Fitzgerald G.F."/>
            <person name="Beresford T."/>
            <person name="Ross R.P."/>
        </authorList>
    </citation>
    <scope>NUCLEOTIDE SEQUENCE [LARGE SCALE GENOMIC DNA]</scope>
    <source>
        <strain>DPC 4571</strain>
    </source>
</reference>